<comment type="function">
    <text evidence="1">Catalyzes the reversible conversion of 2-phosphoglycerate (2-PG) into phosphoenolpyruvate (PEP). It is essential for the degradation of carbohydrates via glycolysis.</text>
</comment>
<comment type="catalytic activity">
    <reaction evidence="1">
        <text>(2R)-2-phosphoglycerate = phosphoenolpyruvate + H2O</text>
        <dbReference type="Rhea" id="RHEA:10164"/>
        <dbReference type="ChEBI" id="CHEBI:15377"/>
        <dbReference type="ChEBI" id="CHEBI:58289"/>
        <dbReference type="ChEBI" id="CHEBI:58702"/>
        <dbReference type="EC" id="4.2.1.11"/>
    </reaction>
</comment>
<comment type="cofactor">
    <cofactor evidence="1">
        <name>Mg(2+)</name>
        <dbReference type="ChEBI" id="CHEBI:18420"/>
    </cofactor>
    <text evidence="1">Binds a second Mg(2+) ion via substrate during catalysis.</text>
</comment>
<comment type="pathway">
    <text evidence="1">Carbohydrate degradation; glycolysis; pyruvate from D-glyceraldehyde 3-phosphate: step 4/5.</text>
</comment>
<comment type="subcellular location">
    <subcellularLocation>
        <location evidence="1">Cytoplasm</location>
    </subcellularLocation>
    <subcellularLocation>
        <location evidence="1">Secreted</location>
    </subcellularLocation>
    <subcellularLocation>
        <location evidence="1">Cell surface</location>
    </subcellularLocation>
    <text evidence="1">Fractions of enolase are present in both the cytoplasm and on the cell surface.</text>
</comment>
<comment type="similarity">
    <text evidence="1">Belongs to the enolase family.</text>
</comment>
<sequence length="428" mass="44750">MPIIEQVGAREILDSRGNPTVEVEVALIDGTFARAAVPSGASTGEHEAVELRDGGDRYGGKGVKKAVEAVLDEIGPAVIGLNADDQRLVDQALVDLDGTPDKSRLGGNSILGVSLAVAKAASESAELPLFRYIGGPNAHILPVPMMNILNGGAHADTGVDIQEFMVAPIGAPSFSEALRWGAEVYHALKAVLKKAGLSTGLGDEGGFAPDVASTTAALDLISQAIEAAGFKPGVDVALALDAAANEFHADGSYTFEGTPRTAAQMTEFYAGLLGSYPLVSIEDPLYENDWDGWAALTAEIGDRVQIVGDDVFVTNPERLEEGIDRGVANALLVKVNQIGTLTETLDAVALAHHSGYRTMISHRSGETEDTIIADLAVAVGSGQIKTGAPARSERVAKYNQLLRIEEALGDAARYAGDLAFPRFVADPK</sequence>
<organism>
    <name type="scientific">Mycobacterium marinum (strain ATCC BAA-535 / M)</name>
    <dbReference type="NCBI Taxonomy" id="216594"/>
    <lineage>
        <taxon>Bacteria</taxon>
        <taxon>Bacillati</taxon>
        <taxon>Actinomycetota</taxon>
        <taxon>Actinomycetes</taxon>
        <taxon>Mycobacteriales</taxon>
        <taxon>Mycobacteriaceae</taxon>
        <taxon>Mycobacterium</taxon>
        <taxon>Mycobacterium ulcerans group</taxon>
    </lineage>
</organism>
<gene>
    <name evidence="1" type="primary">eno</name>
    <name type="ordered locus">MMAR_4462</name>
</gene>
<proteinExistence type="inferred from homology"/>
<protein>
    <recommendedName>
        <fullName evidence="1">Enolase</fullName>
        <ecNumber evidence="1">4.2.1.11</ecNumber>
    </recommendedName>
    <alternativeName>
        <fullName evidence="1">2-phospho-D-glycerate hydro-lyase</fullName>
    </alternativeName>
    <alternativeName>
        <fullName evidence="1">2-phosphoglycerate dehydratase</fullName>
    </alternativeName>
</protein>
<accession>B2HDI5</accession>
<dbReference type="EC" id="4.2.1.11" evidence="1"/>
<dbReference type="EMBL" id="CP000854">
    <property type="protein sequence ID" value="ACC42869.1"/>
    <property type="molecule type" value="Genomic_DNA"/>
</dbReference>
<dbReference type="RefSeq" id="WP_012396016.1">
    <property type="nucleotide sequence ID" value="NC_010612.1"/>
</dbReference>
<dbReference type="SMR" id="B2HDI5"/>
<dbReference type="STRING" id="216594.MMAR_4462"/>
<dbReference type="GeneID" id="34340902"/>
<dbReference type="KEGG" id="mmi:MMAR_4462"/>
<dbReference type="eggNOG" id="COG4948">
    <property type="taxonomic scope" value="Bacteria"/>
</dbReference>
<dbReference type="HOGENOM" id="CLU_031223_2_1_11"/>
<dbReference type="OrthoDB" id="9804716at2"/>
<dbReference type="UniPathway" id="UPA00109">
    <property type="reaction ID" value="UER00187"/>
</dbReference>
<dbReference type="Proteomes" id="UP000001190">
    <property type="component" value="Chromosome"/>
</dbReference>
<dbReference type="GO" id="GO:0009986">
    <property type="term" value="C:cell surface"/>
    <property type="evidence" value="ECO:0007669"/>
    <property type="project" value="UniProtKB-SubCell"/>
</dbReference>
<dbReference type="GO" id="GO:0005576">
    <property type="term" value="C:extracellular region"/>
    <property type="evidence" value="ECO:0007669"/>
    <property type="project" value="UniProtKB-SubCell"/>
</dbReference>
<dbReference type="GO" id="GO:0000015">
    <property type="term" value="C:phosphopyruvate hydratase complex"/>
    <property type="evidence" value="ECO:0007669"/>
    <property type="project" value="InterPro"/>
</dbReference>
<dbReference type="GO" id="GO:0000287">
    <property type="term" value="F:magnesium ion binding"/>
    <property type="evidence" value="ECO:0007669"/>
    <property type="project" value="UniProtKB-UniRule"/>
</dbReference>
<dbReference type="GO" id="GO:0004634">
    <property type="term" value="F:phosphopyruvate hydratase activity"/>
    <property type="evidence" value="ECO:0007669"/>
    <property type="project" value="UniProtKB-UniRule"/>
</dbReference>
<dbReference type="GO" id="GO:0006096">
    <property type="term" value="P:glycolytic process"/>
    <property type="evidence" value="ECO:0007669"/>
    <property type="project" value="UniProtKB-UniRule"/>
</dbReference>
<dbReference type="CDD" id="cd03313">
    <property type="entry name" value="enolase"/>
    <property type="match status" value="1"/>
</dbReference>
<dbReference type="FunFam" id="3.20.20.120:FF:000001">
    <property type="entry name" value="Enolase"/>
    <property type="match status" value="1"/>
</dbReference>
<dbReference type="FunFam" id="3.30.390.10:FF:000001">
    <property type="entry name" value="Enolase"/>
    <property type="match status" value="1"/>
</dbReference>
<dbReference type="Gene3D" id="3.20.20.120">
    <property type="entry name" value="Enolase-like C-terminal domain"/>
    <property type="match status" value="1"/>
</dbReference>
<dbReference type="Gene3D" id="3.30.390.10">
    <property type="entry name" value="Enolase-like, N-terminal domain"/>
    <property type="match status" value="1"/>
</dbReference>
<dbReference type="HAMAP" id="MF_00318">
    <property type="entry name" value="Enolase"/>
    <property type="match status" value="1"/>
</dbReference>
<dbReference type="InterPro" id="IPR000941">
    <property type="entry name" value="Enolase"/>
</dbReference>
<dbReference type="InterPro" id="IPR036849">
    <property type="entry name" value="Enolase-like_C_sf"/>
</dbReference>
<dbReference type="InterPro" id="IPR029017">
    <property type="entry name" value="Enolase-like_N"/>
</dbReference>
<dbReference type="InterPro" id="IPR020810">
    <property type="entry name" value="Enolase_C"/>
</dbReference>
<dbReference type="InterPro" id="IPR020809">
    <property type="entry name" value="Enolase_CS"/>
</dbReference>
<dbReference type="InterPro" id="IPR020811">
    <property type="entry name" value="Enolase_N"/>
</dbReference>
<dbReference type="NCBIfam" id="TIGR01060">
    <property type="entry name" value="eno"/>
    <property type="match status" value="1"/>
</dbReference>
<dbReference type="PANTHER" id="PTHR11902">
    <property type="entry name" value="ENOLASE"/>
    <property type="match status" value="1"/>
</dbReference>
<dbReference type="PANTHER" id="PTHR11902:SF1">
    <property type="entry name" value="ENOLASE"/>
    <property type="match status" value="1"/>
</dbReference>
<dbReference type="Pfam" id="PF00113">
    <property type="entry name" value="Enolase_C"/>
    <property type="match status" value="1"/>
</dbReference>
<dbReference type="Pfam" id="PF03952">
    <property type="entry name" value="Enolase_N"/>
    <property type="match status" value="1"/>
</dbReference>
<dbReference type="PIRSF" id="PIRSF001400">
    <property type="entry name" value="Enolase"/>
    <property type="match status" value="1"/>
</dbReference>
<dbReference type="PRINTS" id="PR00148">
    <property type="entry name" value="ENOLASE"/>
</dbReference>
<dbReference type="SFLD" id="SFLDS00001">
    <property type="entry name" value="Enolase"/>
    <property type="match status" value="1"/>
</dbReference>
<dbReference type="SFLD" id="SFLDF00002">
    <property type="entry name" value="enolase"/>
    <property type="match status" value="1"/>
</dbReference>
<dbReference type="SMART" id="SM01192">
    <property type="entry name" value="Enolase_C"/>
    <property type="match status" value="1"/>
</dbReference>
<dbReference type="SMART" id="SM01193">
    <property type="entry name" value="Enolase_N"/>
    <property type="match status" value="1"/>
</dbReference>
<dbReference type="SUPFAM" id="SSF51604">
    <property type="entry name" value="Enolase C-terminal domain-like"/>
    <property type="match status" value="1"/>
</dbReference>
<dbReference type="SUPFAM" id="SSF54826">
    <property type="entry name" value="Enolase N-terminal domain-like"/>
    <property type="match status" value="1"/>
</dbReference>
<dbReference type="PROSITE" id="PS00164">
    <property type="entry name" value="ENOLASE"/>
    <property type="match status" value="1"/>
</dbReference>
<name>ENO_MYCMM</name>
<evidence type="ECO:0000255" key="1">
    <source>
        <dbReference type="HAMAP-Rule" id="MF_00318"/>
    </source>
</evidence>
<keyword id="KW-0963">Cytoplasm</keyword>
<keyword id="KW-0324">Glycolysis</keyword>
<keyword id="KW-0456">Lyase</keyword>
<keyword id="KW-0460">Magnesium</keyword>
<keyword id="KW-0479">Metal-binding</keyword>
<keyword id="KW-1185">Reference proteome</keyword>
<keyword id="KW-0964">Secreted</keyword>
<reference key="1">
    <citation type="journal article" date="2008" name="Genome Res.">
        <title>Insights from the complete genome sequence of Mycobacterium marinum on the evolution of Mycobacterium tuberculosis.</title>
        <authorList>
            <person name="Stinear T.P."/>
            <person name="Seemann T."/>
            <person name="Harrison P.F."/>
            <person name="Jenkin G.A."/>
            <person name="Davies J.K."/>
            <person name="Johnson P.D."/>
            <person name="Abdellah Z."/>
            <person name="Arrowsmith C."/>
            <person name="Chillingworth T."/>
            <person name="Churcher C."/>
            <person name="Clarke K."/>
            <person name="Cronin A."/>
            <person name="Davis P."/>
            <person name="Goodhead I."/>
            <person name="Holroyd N."/>
            <person name="Jagels K."/>
            <person name="Lord A."/>
            <person name="Moule S."/>
            <person name="Mungall K."/>
            <person name="Norbertczak H."/>
            <person name="Quail M.A."/>
            <person name="Rabbinowitsch E."/>
            <person name="Walker D."/>
            <person name="White B."/>
            <person name="Whitehead S."/>
            <person name="Small P.L."/>
            <person name="Brosch R."/>
            <person name="Ramakrishnan L."/>
            <person name="Fischbach M.A."/>
            <person name="Parkhill J."/>
            <person name="Cole S.T."/>
        </authorList>
    </citation>
    <scope>NUCLEOTIDE SEQUENCE [LARGE SCALE GENOMIC DNA]</scope>
    <source>
        <strain>ATCC BAA-535 / M</strain>
    </source>
</reference>
<feature type="chain" id="PRO_1000115889" description="Enolase">
    <location>
        <begin position="1"/>
        <end position="428"/>
    </location>
</feature>
<feature type="active site" description="Proton donor" evidence="1">
    <location>
        <position position="204"/>
    </location>
</feature>
<feature type="active site" description="Proton acceptor" evidence="1">
    <location>
        <position position="334"/>
    </location>
</feature>
<feature type="binding site" evidence="1">
    <location>
        <position position="162"/>
    </location>
    <ligand>
        <name>(2R)-2-phosphoglycerate</name>
        <dbReference type="ChEBI" id="CHEBI:58289"/>
    </ligand>
</feature>
<feature type="binding site" evidence="1">
    <location>
        <position position="241"/>
    </location>
    <ligand>
        <name>Mg(2+)</name>
        <dbReference type="ChEBI" id="CHEBI:18420"/>
    </ligand>
</feature>
<feature type="binding site" evidence="1">
    <location>
        <position position="282"/>
    </location>
    <ligand>
        <name>Mg(2+)</name>
        <dbReference type="ChEBI" id="CHEBI:18420"/>
    </ligand>
</feature>
<feature type="binding site" evidence="1">
    <location>
        <position position="309"/>
    </location>
    <ligand>
        <name>Mg(2+)</name>
        <dbReference type="ChEBI" id="CHEBI:18420"/>
    </ligand>
</feature>
<feature type="binding site" evidence="1">
    <location>
        <position position="334"/>
    </location>
    <ligand>
        <name>(2R)-2-phosphoglycerate</name>
        <dbReference type="ChEBI" id="CHEBI:58289"/>
    </ligand>
</feature>
<feature type="binding site" evidence="1">
    <location>
        <position position="363"/>
    </location>
    <ligand>
        <name>(2R)-2-phosphoglycerate</name>
        <dbReference type="ChEBI" id="CHEBI:58289"/>
    </ligand>
</feature>
<feature type="binding site" evidence="1">
    <location>
        <position position="364"/>
    </location>
    <ligand>
        <name>(2R)-2-phosphoglycerate</name>
        <dbReference type="ChEBI" id="CHEBI:58289"/>
    </ligand>
</feature>
<feature type="binding site" evidence="1">
    <location>
        <position position="385"/>
    </location>
    <ligand>
        <name>(2R)-2-phosphoglycerate</name>
        <dbReference type="ChEBI" id="CHEBI:58289"/>
    </ligand>
</feature>